<gene>
    <name type="primary">MT-CO1</name>
    <name type="synonym">COI</name>
    <name type="synonym">COXI</name>
    <name type="synonym">MTCO1</name>
</gene>
<protein>
    <recommendedName>
        <fullName>Cytochrome c oxidase subunit 1</fullName>
        <ecNumber>7.1.1.9</ecNumber>
    </recommendedName>
    <alternativeName>
        <fullName>Cytochrome c oxidase polypeptide I</fullName>
    </alternativeName>
</protein>
<name>COX1_SCYCA</name>
<dbReference type="EC" id="7.1.1.9"/>
<dbReference type="EMBL" id="Y16067">
    <property type="protein sequence ID" value="CAA76021.1"/>
    <property type="molecule type" value="Genomic_DNA"/>
</dbReference>
<dbReference type="PIR" id="T11302">
    <property type="entry name" value="T11302"/>
</dbReference>
<dbReference type="SMR" id="O79403"/>
<dbReference type="CTD" id="4512"/>
<dbReference type="OrthoDB" id="10002679at2759"/>
<dbReference type="UniPathway" id="UPA00705"/>
<dbReference type="GO" id="GO:0005743">
    <property type="term" value="C:mitochondrial inner membrane"/>
    <property type="evidence" value="ECO:0007669"/>
    <property type="project" value="UniProtKB-SubCell"/>
</dbReference>
<dbReference type="GO" id="GO:0045277">
    <property type="term" value="C:respiratory chain complex IV"/>
    <property type="evidence" value="ECO:0000250"/>
    <property type="project" value="UniProtKB"/>
</dbReference>
<dbReference type="GO" id="GO:0004129">
    <property type="term" value="F:cytochrome-c oxidase activity"/>
    <property type="evidence" value="ECO:0007669"/>
    <property type="project" value="UniProtKB-EC"/>
</dbReference>
<dbReference type="GO" id="GO:0020037">
    <property type="term" value="F:heme binding"/>
    <property type="evidence" value="ECO:0007669"/>
    <property type="project" value="InterPro"/>
</dbReference>
<dbReference type="GO" id="GO:0046872">
    <property type="term" value="F:metal ion binding"/>
    <property type="evidence" value="ECO:0007669"/>
    <property type="project" value="UniProtKB-KW"/>
</dbReference>
<dbReference type="GO" id="GO:0015990">
    <property type="term" value="P:electron transport coupled proton transport"/>
    <property type="evidence" value="ECO:0007669"/>
    <property type="project" value="TreeGrafter"/>
</dbReference>
<dbReference type="GO" id="GO:0006123">
    <property type="term" value="P:mitochondrial electron transport, cytochrome c to oxygen"/>
    <property type="evidence" value="ECO:0007669"/>
    <property type="project" value="TreeGrafter"/>
</dbReference>
<dbReference type="CDD" id="cd01663">
    <property type="entry name" value="Cyt_c_Oxidase_I"/>
    <property type="match status" value="1"/>
</dbReference>
<dbReference type="FunFam" id="1.20.210.10:FF:000001">
    <property type="entry name" value="Cytochrome c oxidase subunit 1"/>
    <property type="match status" value="1"/>
</dbReference>
<dbReference type="Gene3D" id="1.20.210.10">
    <property type="entry name" value="Cytochrome c oxidase-like, subunit I domain"/>
    <property type="match status" value="1"/>
</dbReference>
<dbReference type="InterPro" id="IPR023616">
    <property type="entry name" value="Cyt_c_oxase-like_su1_dom"/>
</dbReference>
<dbReference type="InterPro" id="IPR036927">
    <property type="entry name" value="Cyt_c_oxase-like_su1_sf"/>
</dbReference>
<dbReference type="InterPro" id="IPR000883">
    <property type="entry name" value="Cyt_C_Oxase_1"/>
</dbReference>
<dbReference type="InterPro" id="IPR023615">
    <property type="entry name" value="Cyt_c_Oxase_su1_BS"/>
</dbReference>
<dbReference type="InterPro" id="IPR033944">
    <property type="entry name" value="Cyt_c_oxase_su1_dom"/>
</dbReference>
<dbReference type="PANTHER" id="PTHR10422">
    <property type="entry name" value="CYTOCHROME C OXIDASE SUBUNIT 1"/>
    <property type="match status" value="1"/>
</dbReference>
<dbReference type="PANTHER" id="PTHR10422:SF18">
    <property type="entry name" value="CYTOCHROME C OXIDASE SUBUNIT 1"/>
    <property type="match status" value="1"/>
</dbReference>
<dbReference type="Pfam" id="PF00115">
    <property type="entry name" value="COX1"/>
    <property type="match status" value="1"/>
</dbReference>
<dbReference type="PRINTS" id="PR01165">
    <property type="entry name" value="CYCOXIDASEI"/>
</dbReference>
<dbReference type="SUPFAM" id="SSF81442">
    <property type="entry name" value="Cytochrome c oxidase subunit I-like"/>
    <property type="match status" value="1"/>
</dbReference>
<dbReference type="PROSITE" id="PS50855">
    <property type="entry name" value="COX1"/>
    <property type="match status" value="1"/>
</dbReference>
<dbReference type="PROSITE" id="PS00077">
    <property type="entry name" value="COX1_CUB"/>
    <property type="match status" value="1"/>
</dbReference>
<keyword id="KW-0106">Calcium</keyword>
<keyword id="KW-0186">Copper</keyword>
<keyword id="KW-0249">Electron transport</keyword>
<keyword id="KW-0349">Heme</keyword>
<keyword id="KW-0408">Iron</keyword>
<keyword id="KW-0460">Magnesium</keyword>
<keyword id="KW-0472">Membrane</keyword>
<keyword id="KW-0479">Metal-binding</keyword>
<keyword id="KW-0496">Mitochondrion</keyword>
<keyword id="KW-0999">Mitochondrion inner membrane</keyword>
<keyword id="KW-0679">Respiratory chain</keyword>
<keyword id="KW-0915">Sodium</keyword>
<keyword id="KW-1278">Translocase</keyword>
<keyword id="KW-0812">Transmembrane</keyword>
<keyword id="KW-1133">Transmembrane helix</keyword>
<keyword id="KW-0813">Transport</keyword>
<organism>
    <name type="scientific">Scyliorhinus canicula</name>
    <name type="common">Small-spotted catshark</name>
    <name type="synonym">Squalus canicula</name>
    <dbReference type="NCBI Taxonomy" id="7830"/>
    <lineage>
        <taxon>Eukaryota</taxon>
        <taxon>Metazoa</taxon>
        <taxon>Chordata</taxon>
        <taxon>Craniata</taxon>
        <taxon>Vertebrata</taxon>
        <taxon>Chondrichthyes</taxon>
        <taxon>Elasmobranchii</taxon>
        <taxon>Galeomorphii</taxon>
        <taxon>Galeoidea</taxon>
        <taxon>Carcharhiniformes</taxon>
        <taxon>Scyliorhinidae</taxon>
        <taxon>Scyliorhinus</taxon>
    </lineage>
</organism>
<evidence type="ECO:0000250" key="1">
    <source>
        <dbReference type="UniProtKB" id="P00395"/>
    </source>
</evidence>
<evidence type="ECO:0000250" key="2">
    <source>
        <dbReference type="UniProtKB" id="P00396"/>
    </source>
</evidence>
<evidence type="ECO:0000250" key="3">
    <source>
        <dbReference type="UniProtKB" id="P00401"/>
    </source>
</evidence>
<evidence type="ECO:0000305" key="4"/>
<comment type="function">
    <text evidence="3">Component of the cytochrome c oxidase, the last enzyme in the mitochondrial electron transport chain which drives oxidative phosphorylation. The respiratory chain contains 3 multisubunit complexes succinate dehydrogenase (complex II, CII), ubiquinol-cytochrome c oxidoreductase (cytochrome b-c1 complex, complex III, CIII) and cytochrome c oxidase (complex IV, CIV), that cooperate to transfer electrons derived from NADH and succinate to molecular oxygen, creating an electrochemical gradient over the inner membrane that drives transmembrane transport and the ATP synthase. Cytochrome c oxidase is the component of the respiratory chain that catalyzes the reduction of oxygen to water. Electrons originating from reduced cytochrome c in the intermembrane space (IMS) are transferred via the dinuclear copper A center (CU(A)) of subunit 2 and heme A of subunit 1 to the active site in subunit 1, a binuclear center (BNC) formed by heme A3 and copper B (CU(B)). The BNC reduces molecular oxygen to 2 water molecules using 4 electrons from cytochrome c in the IMS and 4 protons from the mitochondrial matrix.</text>
</comment>
<comment type="catalytic activity">
    <reaction evidence="3">
        <text>4 Fe(II)-[cytochrome c] + O2 + 8 H(+)(in) = 4 Fe(III)-[cytochrome c] + 2 H2O + 4 H(+)(out)</text>
        <dbReference type="Rhea" id="RHEA:11436"/>
        <dbReference type="Rhea" id="RHEA-COMP:10350"/>
        <dbReference type="Rhea" id="RHEA-COMP:14399"/>
        <dbReference type="ChEBI" id="CHEBI:15377"/>
        <dbReference type="ChEBI" id="CHEBI:15378"/>
        <dbReference type="ChEBI" id="CHEBI:15379"/>
        <dbReference type="ChEBI" id="CHEBI:29033"/>
        <dbReference type="ChEBI" id="CHEBI:29034"/>
        <dbReference type="EC" id="7.1.1.9"/>
    </reaction>
    <physiologicalReaction direction="left-to-right" evidence="3">
        <dbReference type="Rhea" id="RHEA:11437"/>
    </physiologicalReaction>
</comment>
<comment type="cofactor">
    <cofactor evidence="2">
        <name>heme</name>
        <dbReference type="ChEBI" id="CHEBI:30413"/>
    </cofactor>
    <text evidence="2">Binds 2 heme A groups non-covalently per subunit.</text>
</comment>
<comment type="cofactor">
    <cofactor evidence="2">
        <name>Cu cation</name>
        <dbReference type="ChEBI" id="CHEBI:23378"/>
    </cofactor>
    <text evidence="2">Binds a copper B center.</text>
</comment>
<comment type="pathway">
    <text evidence="3">Energy metabolism; oxidative phosphorylation.</text>
</comment>
<comment type="subunit">
    <text evidence="1 2">Component of the cytochrome c oxidase (complex IV, CIV), a multisubunit enzyme composed of 14 subunits. The complex is composed of a catalytic core of 3 subunits MT-CO1, MT-CO2 and MT-CO3, encoded in the mitochondrial DNA, and 11 supernumerary subunits COX4I, COX5A, COX5B, COX6A, COX6B, COX6C, COX7A, COX7B, COX7C, COX8 and NDUFA4, which are encoded in the nuclear genome. The complex exists as a monomer or a dimer and forms supercomplexes (SCs) in the inner mitochondrial membrane with NADH-ubiquinone oxidoreductase (complex I, CI) and ubiquinol-cytochrome c oxidoreductase (cytochrome b-c1 complex, complex III, CIII), resulting in different assemblies (supercomplex SCI(1)III(2)IV(1) and megacomplex MCI(2)III(2)IV(2)) (By similarity). As a newly synthesized protein, rapidly incorporates into a multi-subunit assembly intermediate in the inner membrane, called MITRAC (mitochondrial translation regulation assembly intermediate of cytochrome c oxidase) complex, whose core components are COA3/MITRAC12 and COX14. Within the MITRAC complex, interacts with COA3 and with SMIM20/MITRAC7; the interaction with SMIM20 stabilizes the newly synthesized MT-CO1 and prevents its premature turnover. Interacts with TMEM177 in a COX20-dependent manner (By similarity).</text>
</comment>
<comment type="subcellular location">
    <subcellularLocation>
        <location evidence="2">Mitochondrion inner membrane</location>
        <topology evidence="2">Multi-pass membrane protein</topology>
    </subcellularLocation>
</comment>
<comment type="similarity">
    <text evidence="4">Belongs to the heme-copper respiratory oxidase family.</text>
</comment>
<sequence>MAINRWLFSTNHKDIGTLYLIFGAWAGMVGTALSLLIRAELGQPGSLLGDDQIYNVIVTAHAFVMIFFMVMPVMIGGFGNWLVPLMIGAPDMAFPRMNNMSFWLLPPSFLLLLASAGVEAGAGTGWTVYPPLAGNMAHAGRSVDLTIFSLHLAGISSILASINFITTIINMKPPAVSQYQTPLFVWSILVTTVLLLLSLPVLAAGITMLLTDRNLNTTFFDPAGGGDPILYQHLFWFFGHPEVYILILPGFGMISHVVAYYSGKKEPFGYMGMVWAMMAIGLLGFIVWAHHMFTVGMDVDTRAYFTSATMIIAIPTGVKVFSWLATLHGGSIKWETPLLWALGFIFLFTVGGLTGIVLANSSLDIVLHDTYYVVAHFHYVQTMGAVFAIMAGFIHWFPLMSGFTLHSTWTKIQFVLMFIGVNLTFFPQHFLGLAGMPRRYSDYPDAYALWNTVSSIGSLISLVAVIMLLFIIWEAFSSKREVLSIELPNTNVEWLHGCPPPYHTYEEPAFVQVQRSF</sequence>
<feature type="chain" id="PRO_0000183415" description="Cytochrome c oxidase subunit 1">
    <location>
        <begin position="1"/>
        <end position="517"/>
    </location>
</feature>
<feature type="topological domain" description="Mitochondrial matrix" evidence="2">
    <location>
        <begin position="1"/>
        <end position="11"/>
    </location>
</feature>
<feature type="transmembrane region" description="Helical; Name=I" evidence="2">
    <location>
        <begin position="12"/>
        <end position="40"/>
    </location>
</feature>
<feature type="topological domain" description="Mitochondrial intermembrane" evidence="2">
    <location>
        <begin position="41"/>
        <end position="50"/>
    </location>
</feature>
<feature type="transmembrane region" description="Helical; Name=II" evidence="2">
    <location>
        <begin position="51"/>
        <end position="86"/>
    </location>
</feature>
<feature type="topological domain" description="Mitochondrial matrix" evidence="2">
    <location>
        <begin position="87"/>
        <end position="94"/>
    </location>
</feature>
<feature type="transmembrane region" description="Helical; Name=III" evidence="2">
    <location>
        <begin position="95"/>
        <end position="117"/>
    </location>
</feature>
<feature type="topological domain" description="Mitochondrial intermembrane" evidence="2">
    <location>
        <begin position="118"/>
        <end position="140"/>
    </location>
</feature>
<feature type="transmembrane region" description="Helical; Name=IV" evidence="2">
    <location>
        <begin position="141"/>
        <end position="170"/>
    </location>
</feature>
<feature type="topological domain" description="Mitochondrial matrix" evidence="2">
    <location>
        <begin position="171"/>
        <end position="182"/>
    </location>
</feature>
<feature type="transmembrane region" description="Helical; Name=V" evidence="2">
    <location>
        <begin position="183"/>
        <end position="212"/>
    </location>
</feature>
<feature type="topological domain" description="Mitochondrial intermembrane" evidence="2">
    <location>
        <begin position="213"/>
        <end position="227"/>
    </location>
</feature>
<feature type="transmembrane region" description="Helical; Name=VI" evidence="2">
    <location>
        <begin position="228"/>
        <end position="261"/>
    </location>
</feature>
<feature type="topological domain" description="Mitochondrial matrix" evidence="2">
    <location>
        <begin position="262"/>
        <end position="269"/>
    </location>
</feature>
<feature type="transmembrane region" description="Helical; Name=VII" evidence="2">
    <location>
        <begin position="270"/>
        <end position="286"/>
    </location>
</feature>
<feature type="topological domain" description="Mitochondrial intermembrane" evidence="2">
    <location>
        <begin position="287"/>
        <end position="298"/>
    </location>
</feature>
<feature type="transmembrane region" description="Helical; Name=VIII" evidence="2">
    <location>
        <begin position="299"/>
        <end position="327"/>
    </location>
</feature>
<feature type="topological domain" description="Mitochondrial matrix" evidence="2">
    <location>
        <begin position="328"/>
        <end position="335"/>
    </location>
</feature>
<feature type="transmembrane region" description="Helical; Name=IX" evidence="2">
    <location>
        <begin position="336"/>
        <end position="357"/>
    </location>
</feature>
<feature type="topological domain" description="Mitochondrial intermembrane" evidence="2">
    <location>
        <begin position="358"/>
        <end position="370"/>
    </location>
</feature>
<feature type="transmembrane region" description="Helical; Name=X" evidence="2">
    <location>
        <begin position="371"/>
        <end position="400"/>
    </location>
</feature>
<feature type="topological domain" description="Mitochondrial matrix" evidence="2">
    <location>
        <begin position="401"/>
        <end position="406"/>
    </location>
</feature>
<feature type="transmembrane region" description="Helical; Name=XI" evidence="2">
    <location>
        <begin position="407"/>
        <end position="433"/>
    </location>
</feature>
<feature type="topological domain" description="Mitochondrial intermembrane" evidence="2">
    <location>
        <begin position="434"/>
        <end position="446"/>
    </location>
</feature>
<feature type="transmembrane region" description="Helical; Name=XII" evidence="2">
    <location>
        <begin position="447"/>
        <end position="478"/>
    </location>
</feature>
<feature type="topological domain" description="Mitochondrial matrix" evidence="2">
    <location>
        <begin position="479"/>
        <end position="517"/>
    </location>
</feature>
<feature type="binding site" evidence="2">
    <location>
        <position position="40"/>
    </location>
    <ligand>
        <name>Na(+)</name>
        <dbReference type="ChEBI" id="CHEBI:29101"/>
    </ligand>
</feature>
<feature type="binding site" evidence="2">
    <location>
        <position position="45"/>
    </location>
    <ligand>
        <name>Na(+)</name>
        <dbReference type="ChEBI" id="CHEBI:29101"/>
    </ligand>
</feature>
<feature type="binding site" description="axial binding residue" evidence="2">
    <location>
        <position position="61"/>
    </location>
    <ligand>
        <name>Fe(II)-heme a</name>
        <dbReference type="ChEBI" id="CHEBI:61715"/>
        <note>low-spin</note>
    </ligand>
    <ligandPart>
        <name>Fe</name>
        <dbReference type="ChEBI" id="CHEBI:18248"/>
    </ligandPart>
</feature>
<feature type="binding site" evidence="2">
    <location>
        <position position="240"/>
    </location>
    <ligand>
        <name>Cu cation</name>
        <dbReference type="ChEBI" id="CHEBI:23378"/>
        <label>B</label>
    </ligand>
</feature>
<feature type="binding site" evidence="2">
    <location>
        <position position="244"/>
    </location>
    <ligand>
        <name>O2</name>
        <dbReference type="ChEBI" id="CHEBI:15379"/>
    </ligand>
</feature>
<feature type="binding site" evidence="2">
    <location>
        <position position="290"/>
    </location>
    <ligand>
        <name>Cu cation</name>
        <dbReference type="ChEBI" id="CHEBI:23378"/>
        <label>B</label>
    </ligand>
</feature>
<feature type="binding site" evidence="2">
    <location>
        <position position="291"/>
    </location>
    <ligand>
        <name>Cu cation</name>
        <dbReference type="ChEBI" id="CHEBI:23378"/>
        <label>B</label>
    </ligand>
</feature>
<feature type="binding site" evidence="2">
    <location>
        <position position="368"/>
    </location>
    <ligand>
        <name>Mg(2+)</name>
        <dbReference type="ChEBI" id="CHEBI:18420"/>
        <note>ligand shared with MT-CO2</note>
    </ligand>
</feature>
<feature type="binding site" evidence="2">
    <location>
        <position position="369"/>
    </location>
    <ligand>
        <name>Mg(2+)</name>
        <dbReference type="ChEBI" id="CHEBI:18420"/>
        <note>ligand shared with MT-CO2</note>
    </ligand>
</feature>
<feature type="binding site" description="axial binding residue" evidence="2">
    <location>
        <position position="376"/>
    </location>
    <ligand>
        <name>heme a3</name>
        <dbReference type="ChEBI" id="CHEBI:83282"/>
        <note>high-spin</note>
    </ligand>
    <ligandPart>
        <name>Fe</name>
        <dbReference type="ChEBI" id="CHEBI:18248"/>
    </ligandPart>
</feature>
<feature type="binding site" description="axial binding residue" evidence="2">
    <location>
        <position position="378"/>
    </location>
    <ligand>
        <name>Fe(II)-heme a</name>
        <dbReference type="ChEBI" id="CHEBI:61715"/>
        <note>low-spin</note>
    </ligand>
    <ligandPart>
        <name>Fe</name>
        <dbReference type="ChEBI" id="CHEBI:18248"/>
    </ligandPart>
</feature>
<feature type="binding site" evidence="2">
    <location>
        <position position="441"/>
    </location>
    <ligand>
        <name>Na(+)</name>
        <dbReference type="ChEBI" id="CHEBI:29101"/>
    </ligand>
</feature>
<feature type="cross-link" description="1'-histidyl-3'-tyrosine (His-Tyr)" evidence="2">
    <location>
        <begin position="240"/>
        <end position="244"/>
    </location>
</feature>
<proteinExistence type="inferred from homology"/>
<geneLocation type="mitochondrion"/>
<accession>O79403</accession>
<reference key="1">
    <citation type="journal article" date="1998" name="Genetics">
        <title>The complete nucleotide sequence of the mitochondrial DNA of the dogfish, Scyliorhinus canicula.</title>
        <authorList>
            <person name="Delarbre C."/>
            <person name="Spruyt N."/>
            <person name="Delmarre C."/>
            <person name="Gallut C."/>
            <person name="Barriel V."/>
            <person name="Janvier P."/>
            <person name="Laudet V."/>
            <person name="Gachelin G."/>
        </authorList>
    </citation>
    <scope>NUCLEOTIDE SEQUENCE [GENOMIC DNA]</scope>
    <source>
        <tissue>Muscle</tissue>
    </source>
</reference>